<keyword id="KW-0963">Cytoplasm</keyword>
<keyword id="KW-0378">Hydrolase</keyword>
<keyword id="KW-1185">Reference proteome</keyword>
<keyword id="KW-0694">RNA-binding</keyword>
<keyword id="KW-0820">tRNA-binding</keyword>
<evidence type="ECO:0000255" key="1">
    <source>
        <dbReference type="HAMAP-Rule" id="MF_00518"/>
    </source>
</evidence>
<feature type="chain" id="PRO_1000146194" description="D-aminoacyl-tRNA deacylase">
    <location>
        <begin position="1"/>
        <end position="153"/>
    </location>
</feature>
<feature type="short sequence motif" description="Gly-cisPro motif, important for rejection of L-amino acids" evidence="1">
    <location>
        <begin position="142"/>
        <end position="143"/>
    </location>
</feature>
<sequence>MIGLLQRVREARVEVAGEIVGRIGPGLLALVCAEQGDSEAQADKLLAKMLKLRIFSDEAGKMNRSVQDLDGQGTCGGLLIVSQFTLAADTRGGNRPSFTQAAPPAQGERLYDYFVAQARAVHPMVATGRFAADMQVHLVNDGPVTLPLRIAPG</sequence>
<dbReference type="EC" id="3.1.1.96" evidence="1"/>
<dbReference type="EMBL" id="CP001392">
    <property type="protein sequence ID" value="ACM31970.1"/>
    <property type="molecule type" value="Genomic_DNA"/>
</dbReference>
<dbReference type="RefSeq" id="WP_012655523.1">
    <property type="nucleotide sequence ID" value="NC_011992.1"/>
</dbReference>
<dbReference type="SMR" id="B9MCH0"/>
<dbReference type="KEGG" id="dia:Dtpsy_0488"/>
<dbReference type="eggNOG" id="COG1490">
    <property type="taxonomic scope" value="Bacteria"/>
</dbReference>
<dbReference type="HOGENOM" id="CLU_076901_1_1_4"/>
<dbReference type="Proteomes" id="UP000000450">
    <property type="component" value="Chromosome"/>
</dbReference>
<dbReference type="GO" id="GO:0005737">
    <property type="term" value="C:cytoplasm"/>
    <property type="evidence" value="ECO:0007669"/>
    <property type="project" value="UniProtKB-SubCell"/>
</dbReference>
<dbReference type="GO" id="GO:0051500">
    <property type="term" value="F:D-tyrosyl-tRNA(Tyr) deacylase activity"/>
    <property type="evidence" value="ECO:0007669"/>
    <property type="project" value="TreeGrafter"/>
</dbReference>
<dbReference type="GO" id="GO:0106026">
    <property type="term" value="F:Gly-tRNA(Ala) deacylase activity"/>
    <property type="evidence" value="ECO:0007669"/>
    <property type="project" value="UniProtKB-UniRule"/>
</dbReference>
<dbReference type="GO" id="GO:0043908">
    <property type="term" value="F:Ser(Gly)-tRNA(Ala) hydrolase activity"/>
    <property type="evidence" value="ECO:0007669"/>
    <property type="project" value="UniProtKB-UniRule"/>
</dbReference>
<dbReference type="GO" id="GO:0000049">
    <property type="term" value="F:tRNA binding"/>
    <property type="evidence" value="ECO:0007669"/>
    <property type="project" value="UniProtKB-UniRule"/>
</dbReference>
<dbReference type="GO" id="GO:0019478">
    <property type="term" value="P:D-amino acid catabolic process"/>
    <property type="evidence" value="ECO:0007669"/>
    <property type="project" value="UniProtKB-UniRule"/>
</dbReference>
<dbReference type="CDD" id="cd00563">
    <property type="entry name" value="Dtyr_deacylase"/>
    <property type="match status" value="1"/>
</dbReference>
<dbReference type="FunFam" id="3.50.80.10:FF:000001">
    <property type="entry name" value="D-aminoacyl-tRNA deacylase"/>
    <property type="match status" value="1"/>
</dbReference>
<dbReference type="Gene3D" id="3.50.80.10">
    <property type="entry name" value="D-tyrosyl-tRNA(Tyr) deacylase"/>
    <property type="match status" value="1"/>
</dbReference>
<dbReference type="HAMAP" id="MF_00518">
    <property type="entry name" value="Deacylase_Dtd"/>
    <property type="match status" value="1"/>
</dbReference>
<dbReference type="InterPro" id="IPR003732">
    <property type="entry name" value="Daa-tRNA_deacyls_DTD"/>
</dbReference>
<dbReference type="InterPro" id="IPR023509">
    <property type="entry name" value="DTD-like_sf"/>
</dbReference>
<dbReference type="NCBIfam" id="TIGR00256">
    <property type="entry name" value="D-aminoacyl-tRNA deacylase"/>
    <property type="match status" value="1"/>
</dbReference>
<dbReference type="PANTHER" id="PTHR10472:SF5">
    <property type="entry name" value="D-AMINOACYL-TRNA DEACYLASE 1"/>
    <property type="match status" value="1"/>
</dbReference>
<dbReference type="PANTHER" id="PTHR10472">
    <property type="entry name" value="D-TYROSYL-TRNA TYR DEACYLASE"/>
    <property type="match status" value="1"/>
</dbReference>
<dbReference type="Pfam" id="PF02580">
    <property type="entry name" value="Tyr_Deacylase"/>
    <property type="match status" value="1"/>
</dbReference>
<dbReference type="SUPFAM" id="SSF69500">
    <property type="entry name" value="DTD-like"/>
    <property type="match status" value="1"/>
</dbReference>
<organism>
    <name type="scientific">Acidovorax ebreus (strain TPSY)</name>
    <name type="common">Diaphorobacter sp. (strain TPSY)</name>
    <dbReference type="NCBI Taxonomy" id="535289"/>
    <lineage>
        <taxon>Bacteria</taxon>
        <taxon>Pseudomonadati</taxon>
        <taxon>Pseudomonadota</taxon>
        <taxon>Betaproteobacteria</taxon>
        <taxon>Burkholderiales</taxon>
        <taxon>Comamonadaceae</taxon>
        <taxon>Diaphorobacter</taxon>
    </lineage>
</organism>
<gene>
    <name evidence="1" type="primary">dtd</name>
    <name type="ordered locus">Dtpsy_0488</name>
</gene>
<protein>
    <recommendedName>
        <fullName evidence="1">D-aminoacyl-tRNA deacylase</fullName>
        <shortName evidence="1">DTD</shortName>
        <ecNumber evidence="1">3.1.1.96</ecNumber>
    </recommendedName>
    <alternativeName>
        <fullName evidence="1">Gly-tRNA(Ala) deacylase</fullName>
    </alternativeName>
</protein>
<reference key="1">
    <citation type="submission" date="2009-01" db="EMBL/GenBank/DDBJ databases">
        <title>Complete sequence of Diaphorobacter sp. TPSY.</title>
        <authorList>
            <consortium name="US DOE Joint Genome Institute"/>
            <person name="Lucas S."/>
            <person name="Copeland A."/>
            <person name="Lapidus A."/>
            <person name="Glavina del Rio T."/>
            <person name="Tice H."/>
            <person name="Bruce D."/>
            <person name="Goodwin L."/>
            <person name="Pitluck S."/>
            <person name="Chertkov O."/>
            <person name="Brettin T."/>
            <person name="Detter J.C."/>
            <person name="Han C."/>
            <person name="Larimer F."/>
            <person name="Land M."/>
            <person name="Hauser L."/>
            <person name="Kyrpides N."/>
            <person name="Mikhailova N."/>
            <person name="Coates J.D."/>
        </authorList>
    </citation>
    <scope>NUCLEOTIDE SEQUENCE [LARGE SCALE GENOMIC DNA]</scope>
    <source>
        <strain>TPSY</strain>
    </source>
</reference>
<name>DTD_ACIET</name>
<comment type="function">
    <text evidence="1">An aminoacyl-tRNA editing enzyme that deacylates mischarged D-aminoacyl-tRNAs. Also deacylates mischarged glycyl-tRNA(Ala), protecting cells against glycine mischarging by AlaRS. Acts via tRNA-based rather than protein-based catalysis; rejects L-amino acids rather than detecting D-amino acids in the active site. By recycling D-aminoacyl-tRNA to D-amino acids and free tRNA molecules, this enzyme counteracts the toxicity associated with the formation of D-aminoacyl-tRNA entities in vivo and helps enforce protein L-homochirality.</text>
</comment>
<comment type="catalytic activity">
    <reaction evidence="1">
        <text>glycyl-tRNA(Ala) + H2O = tRNA(Ala) + glycine + H(+)</text>
        <dbReference type="Rhea" id="RHEA:53744"/>
        <dbReference type="Rhea" id="RHEA-COMP:9657"/>
        <dbReference type="Rhea" id="RHEA-COMP:13640"/>
        <dbReference type="ChEBI" id="CHEBI:15377"/>
        <dbReference type="ChEBI" id="CHEBI:15378"/>
        <dbReference type="ChEBI" id="CHEBI:57305"/>
        <dbReference type="ChEBI" id="CHEBI:78442"/>
        <dbReference type="ChEBI" id="CHEBI:78522"/>
        <dbReference type="EC" id="3.1.1.96"/>
    </reaction>
</comment>
<comment type="catalytic activity">
    <reaction evidence="1">
        <text>a D-aminoacyl-tRNA + H2O = a tRNA + a D-alpha-amino acid + H(+)</text>
        <dbReference type="Rhea" id="RHEA:13953"/>
        <dbReference type="Rhea" id="RHEA-COMP:10123"/>
        <dbReference type="Rhea" id="RHEA-COMP:10124"/>
        <dbReference type="ChEBI" id="CHEBI:15377"/>
        <dbReference type="ChEBI" id="CHEBI:15378"/>
        <dbReference type="ChEBI" id="CHEBI:59871"/>
        <dbReference type="ChEBI" id="CHEBI:78442"/>
        <dbReference type="ChEBI" id="CHEBI:79333"/>
        <dbReference type="EC" id="3.1.1.96"/>
    </reaction>
</comment>
<comment type="subunit">
    <text evidence="1">Homodimer.</text>
</comment>
<comment type="subcellular location">
    <subcellularLocation>
        <location evidence="1">Cytoplasm</location>
    </subcellularLocation>
</comment>
<comment type="domain">
    <text evidence="1">A Gly-cisPro motif from one monomer fits into the active site of the other monomer to allow specific chiral rejection of L-amino acids.</text>
</comment>
<comment type="similarity">
    <text evidence="1">Belongs to the DTD family.</text>
</comment>
<proteinExistence type="inferred from homology"/>
<accession>B9MCH0</accession>